<proteinExistence type="inferred from homology"/>
<sequence>MSGGLLSLESALRTCKVNTELAARLQSHRTIGPASEKVCPVWNGLDAAGRQVCPDSFANKSPGCHSPMDRLHVENEISRPQYISYLSYGSQGVYGNEYGTIGGHRAAYPDNSIYGISGSFGQQLTSHVKPSMTECSCVRLGTQSQCVAGTSHNTGLSYKTLNGYY</sequence>
<keyword id="KW-1185">Reference proteome</keyword>
<name>VF415_IIV3</name>
<dbReference type="EMBL" id="DQ643392">
    <property type="protein sequence ID" value="ABF82048.1"/>
    <property type="molecule type" value="Genomic_DNA"/>
</dbReference>
<dbReference type="RefSeq" id="YP_654590.1">
    <property type="nucleotide sequence ID" value="NC_008187.1"/>
</dbReference>
<dbReference type="KEGG" id="vg:4156267"/>
<dbReference type="OrthoDB" id="20508at10239"/>
<dbReference type="Proteomes" id="UP000001358">
    <property type="component" value="Genome"/>
</dbReference>
<gene>
    <name type="ORF">IIV3-018L</name>
</gene>
<reference key="1">
    <citation type="journal article" date="2006" name="J. Virol.">
        <title>Genome of invertebrate iridescent virus type 3 (mosquito iridescent virus).</title>
        <authorList>
            <person name="Delhon G."/>
            <person name="Tulman E.R."/>
            <person name="Afonso C.L."/>
            <person name="Lu Z."/>
            <person name="Becnel J.J."/>
            <person name="Moser B.A."/>
            <person name="Kutish G.F."/>
            <person name="Rock D.L."/>
        </authorList>
    </citation>
    <scope>NUCLEOTIDE SEQUENCE [LARGE SCALE GENOMIC DNA]</scope>
</reference>
<comment type="similarity">
    <text evidence="1">Belongs to the IIV-6 415R family.</text>
</comment>
<accession>Q197E2</accession>
<organism>
    <name type="scientific">Invertebrate iridescent virus 3</name>
    <name type="common">IIV-3</name>
    <name type="synonym">Mosquito iridescent virus</name>
    <dbReference type="NCBI Taxonomy" id="345201"/>
    <lineage>
        <taxon>Viruses</taxon>
        <taxon>Varidnaviria</taxon>
        <taxon>Bamfordvirae</taxon>
        <taxon>Nucleocytoviricota</taxon>
        <taxon>Megaviricetes</taxon>
        <taxon>Pimascovirales</taxon>
        <taxon>Iridoviridae</taxon>
        <taxon>Betairidovirinae</taxon>
        <taxon>Chloriridovirus</taxon>
    </lineage>
</organism>
<protein>
    <recommendedName>
        <fullName>Uncharacterized protein 018L</fullName>
    </recommendedName>
</protein>
<feature type="chain" id="PRO_0000377795" description="Uncharacterized protein 018L">
    <location>
        <begin position="1"/>
        <end position="165"/>
    </location>
</feature>
<organismHost>
    <name type="scientific">Aedes vexans</name>
    <name type="common">Inland floodwater mosquito</name>
    <name type="synonym">Culex vexans</name>
    <dbReference type="NCBI Taxonomy" id="7163"/>
</organismHost>
<organismHost>
    <name type="scientific">Culex territans</name>
    <dbReference type="NCBI Taxonomy" id="42431"/>
</organismHost>
<organismHost>
    <name type="scientific">Culiseta annulata</name>
    <dbReference type="NCBI Taxonomy" id="332058"/>
</organismHost>
<organismHost>
    <name type="scientific">Ochlerotatus sollicitans</name>
    <name type="common">eastern saltmarsh mosquito</name>
    <dbReference type="NCBI Taxonomy" id="310513"/>
</organismHost>
<organismHost>
    <name type="scientific">Ochlerotatus taeniorhynchus</name>
    <name type="common">Black salt marsh mosquito</name>
    <name type="synonym">Aedes taeniorhynchus</name>
    <dbReference type="NCBI Taxonomy" id="329105"/>
</organismHost>
<organismHost>
    <name type="scientific">Psorophora ferox</name>
    <dbReference type="NCBI Taxonomy" id="7183"/>
</organismHost>
<evidence type="ECO:0000305" key="1"/>